<feature type="chain" id="PRO_0000141323" description="Cobyric acid synthase">
    <location>
        <begin position="1"/>
        <end position="486"/>
    </location>
</feature>
<feature type="domain" description="GATase cobBQ-type" evidence="1">
    <location>
        <begin position="248"/>
        <end position="435"/>
    </location>
</feature>
<feature type="active site" description="Nucleophile" evidence="1">
    <location>
        <position position="329"/>
    </location>
</feature>
<feature type="active site" evidence="1">
    <location>
        <position position="427"/>
    </location>
</feature>
<accession>Q885W8</accession>
<dbReference type="EMBL" id="AE016853">
    <property type="protein sequence ID" value="AAO55233.1"/>
    <property type="molecule type" value="Genomic_DNA"/>
</dbReference>
<dbReference type="RefSeq" id="NP_791538.1">
    <property type="nucleotide sequence ID" value="NC_004578.1"/>
</dbReference>
<dbReference type="RefSeq" id="WP_005766682.1">
    <property type="nucleotide sequence ID" value="NC_004578.1"/>
</dbReference>
<dbReference type="SMR" id="Q885W8"/>
<dbReference type="STRING" id="223283.PSPTO_1713"/>
<dbReference type="GeneID" id="1183350"/>
<dbReference type="KEGG" id="pst:PSPTO_1713"/>
<dbReference type="PATRIC" id="fig|223283.9.peg.1741"/>
<dbReference type="eggNOG" id="COG1492">
    <property type="taxonomic scope" value="Bacteria"/>
</dbReference>
<dbReference type="HOGENOM" id="CLU_019250_2_2_6"/>
<dbReference type="OrthoDB" id="9808302at2"/>
<dbReference type="PhylomeDB" id="Q885W8"/>
<dbReference type="UniPathway" id="UPA00148"/>
<dbReference type="Proteomes" id="UP000002515">
    <property type="component" value="Chromosome"/>
</dbReference>
<dbReference type="GO" id="GO:0015420">
    <property type="term" value="F:ABC-type vitamin B12 transporter activity"/>
    <property type="evidence" value="ECO:0007669"/>
    <property type="project" value="UniProtKB-UniRule"/>
</dbReference>
<dbReference type="GO" id="GO:0003824">
    <property type="term" value="F:catalytic activity"/>
    <property type="evidence" value="ECO:0007669"/>
    <property type="project" value="InterPro"/>
</dbReference>
<dbReference type="GO" id="GO:0009236">
    <property type="term" value="P:cobalamin biosynthetic process"/>
    <property type="evidence" value="ECO:0007669"/>
    <property type="project" value="UniProtKB-UniRule"/>
</dbReference>
<dbReference type="CDD" id="cd05389">
    <property type="entry name" value="CobQ_N"/>
    <property type="match status" value="1"/>
</dbReference>
<dbReference type="CDD" id="cd01750">
    <property type="entry name" value="GATase1_CobQ"/>
    <property type="match status" value="1"/>
</dbReference>
<dbReference type="Gene3D" id="3.40.50.880">
    <property type="match status" value="1"/>
</dbReference>
<dbReference type="Gene3D" id="3.40.50.300">
    <property type="entry name" value="P-loop containing nucleotide triphosphate hydrolases"/>
    <property type="match status" value="1"/>
</dbReference>
<dbReference type="HAMAP" id="MF_00028">
    <property type="entry name" value="CobQ"/>
    <property type="match status" value="1"/>
</dbReference>
<dbReference type="InterPro" id="IPR029062">
    <property type="entry name" value="Class_I_gatase-like"/>
</dbReference>
<dbReference type="InterPro" id="IPR002586">
    <property type="entry name" value="CobQ/CobB/MinD/ParA_Nub-bd_dom"/>
</dbReference>
<dbReference type="InterPro" id="IPR033949">
    <property type="entry name" value="CobQ_GATase1"/>
</dbReference>
<dbReference type="InterPro" id="IPR047045">
    <property type="entry name" value="CobQ_N"/>
</dbReference>
<dbReference type="InterPro" id="IPR004459">
    <property type="entry name" value="CobQ_synth"/>
</dbReference>
<dbReference type="InterPro" id="IPR011698">
    <property type="entry name" value="GATase_3"/>
</dbReference>
<dbReference type="InterPro" id="IPR027417">
    <property type="entry name" value="P-loop_NTPase"/>
</dbReference>
<dbReference type="NCBIfam" id="TIGR00313">
    <property type="entry name" value="cobQ"/>
    <property type="match status" value="1"/>
</dbReference>
<dbReference type="NCBIfam" id="NF001989">
    <property type="entry name" value="PRK00784.1"/>
    <property type="match status" value="1"/>
</dbReference>
<dbReference type="PANTHER" id="PTHR21343:SF1">
    <property type="entry name" value="COBYRIC ACID SYNTHASE"/>
    <property type="match status" value="1"/>
</dbReference>
<dbReference type="PANTHER" id="PTHR21343">
    <property type="entry name" value="DETHIOBIOTIN SYNTHETASE"/>
    <property type="match status" value="1"/>
</dbReference>
<dbReference type="Pfam" id="PF01656">
    <property type="entry name" value="CbiA"/>
    <property type="match status" value="1"/>
</dbReference>
<dbReference type="Pfam" id="PF07685">
    <property type="entry name" value="GATase_3"/>
    <property type="match status" value="1"/>
</dbReference>
<dbReference type="SUPFAM" id="SSF52317">
    <property type="entry name" value="Class I glutamine amidotransferase-like"/>
    <property type="match status" value="1"/>
</dbReference>
<dbReference type="SUPFAM" id="SSF52540">
    <property type="entry name" value="P-loop containing nucleoside triphosphate hydrolases"/>
    <property type="match status" value="1"/>
</dbReference>
<dbReference type="PROSITE" id="PS51274">
    <property type="entry name" value="GATASE_COBBQ"/>
    <property type="match status" value="1"/>
</dbReference>
<proteinExistence type="inferred from homology"/>
<comment type="function">
    <text evidence="1">Catalyzes amidations at positions B, D, E, and G on adenosylcobyrinic A,C-diamide. NH(2) groups are provided by glutamine, and one molecule of ATP is hydrogenolyzed for each amidation.</text>
</comment>
<comment type="pathway">
    <text evidence="1">Cofactor biosynthesis; adenosylcobalamin biosynthesis.</text>
</comment>
<comment type="similarity">
    <text evidence="1">Belongs to the CobB/CobQ family. CobQ subfamily.</text>
</comment>
<sequence>MTTLMVQGTTSDAGKSTLVTALCRWLTRQGVKVVPFKPQNMALNSAVTADGGEIGRAQAVQAQACFLAPHTDMNPVLLKPNSDTGAQVIIHGRAVTTMNAVAYHGYKEIAMQAVLESHRRLSESYPVIMVEGAGSPAEINLRANDIANMGFAEAVDCPVLLIADINRGGVFAHLVGTLELLSPSEQARVKGFIINRFRGDIALLQPGLDWLEARTGKPVVGVLPYVMDLHLEAEDGLDQRQTDKVEQVLNVVVPVLPRISNHTDFDPLRLHPQVNLQFIGPGQPIPPADLIILPGSKSVRSDLNYLRANGWETAIDRHLRYGGKLMGICGGLQMLGEHLHDPLGLEGAAGSSAGLGLLAMSTVLETEKQLRNVRGRLTLEDAEVSGYEIHAGVTTGAALEQAAVQLDDGRCDGAQSADGQILGTYLHGLFESPAACSALLRWAGLENVQSVDYHALRERDIERLADLVEKHLDGTLLRELCGLEAT</sequence>
<protein>
    <recommendedName>
        <fullName evidence="1">Cobyric acid synthase</fullName>
    </recommendedName>
</protein>
<evidence type="ECO:0000255" key="1">
    <source>
        <dbReference type="HAMAP-Rule" id="MF_00028"/>
    </source>
</evidence>
<name>COBQ_PSESM</name>
<reference key="1">
    <citation type="journal article" date="2003" name="Proc. Natl. Acad. Sci. U.S.A.">
        <title>The complete genome sequence of the Arabidopsis and tomato pathogen Pseudomonas syringae pv. tomato DC3000.</title>
        <authorList>
            <person name="Buell C.R."/>
            <person name="Joardar V."/>
            <person name="Lindeberg M."/>
            <person name="Selengut J."/>
            <person name="Paulsen I.T."/>
            <person name="Gwinn M.L."/>
            <person name="Dodson R.J."/>
            <person name="DeBoy R.T."/>
            <person name="Durkin A.S."/>
            <person name="Kolonay J.F."/>
            <person name="Madupu R."/>
            <person name="Daugherty S.C."/>
            <person name="Brinkac L.M."/>
            <person name="Beanan M.J."/>
            <person name="Haft D.H."/>
            <person name="Nelson W.C."/>
            <person name="Davidsen T.M."/>
            <person name="Zafar N."/>
            <person name="Zhou L."/>
            <person name="Liu J."/>
            <person name="Yuan Q."/>
            <person name="Khouri H.M."/>
            <person name="Fedorova N.B."/>
            <person name="Tran B."/>
            <person name="Russell D."/>
            <person name="Berry K.J."/>
            <person name="Utterback T.R."/>
            <person name="Van Aken S.E."/>
            <person name="Feldblyum T.V."/>
            <person name="D'Ascenzo M."/>
            <person name="Deng W.-L."/>
            <person name="Ramos A.R."/>
            <person name="Alfano J.R."/>
            <person name="Cartinhour S."/>
            <person name="Chatterjee A.K."/>
            <person name="Delaney T.P."/>
            <person name="Lazarowitz S.G."/>
            <person name="Martin G.B."/>
            <person name="Schneider D.J."/>
            <person name="Tang X."/>
            <person name="Bender C.L."/>
            <person name="White O."/>
            <person name="Fraser C.M."/>
            <person name="Collmer A."/>
        </authorList>
    </citation>
    <scope>NUCLEOTIDE SEQUENCE [LARGE SCALE GENOMIC DNA]</scope>
    <source>
        <strain>ATCC BAA-871 / DC3000</strain>
    </source>
</reference>
<organism>
    <name type="scientific">Pseudomonas syringae pv. tomato (strain ATCC BAA-871 / DC3000)</name>
    <dbReference type="NCBI Taxonomy" id="223283"/>
    <lineage>
        <taxon>Bacteria</taxon>
        <taxon>Pseudomonadati</taxon>
        <taxon>Pseudomonadota</taxon>
        <taxon>Gammaproteobacteria</taxon>
        <taxon>Pseudomonadales</taxon>
        <taxon>Pseudomonadaceae</taxon>
        <taxon>Pseudomonas</taxon>
    </lineage>
</organism>
<gene>
    <name evidence="1" type="primary">cobQ</name>
    <name type="ordered locus">PSPTO_1713</name>
</gene>
<keyword id="KW-0169">Cobalamin biosynthesis</keyword>
<keyword id="KW-0315">Glutamine amidotransferase</keyword>
<keyword id="KW-1185">Reference proteome</keyword>